<reference key="1">
    <citation type="journal article" date="2003" name="J. Bacteriol.">
        <title>Complete genome sequence of the broad-host-range vibriophage KVP40: comparative genomics of a T4-related bacteriophage.</title>
        <authorList>
            <person name="Miller E.S."/>
            <person name="Heidelberg J.F."/>
            <person name="Eisen J.A."/>
            <person name="Nelson W.C."/>
            <person name="Durkin A.S."/>
            <person name="Ciecko A."/>
            <person name="Feldblyum T.V."/>
            <person name="White O."/>
            <person name="Paulsen I.T."/>
            <person name="Nierman W.C."/>
            <person name="Lee J."/>
            <person name="Szczypinski B."/>
            <person name="Fraser C.M."/>
        </authorList>
    </citation>
    <scope>NUCLEOTIDE SEQUENCE [LARGE SCALE GENOMIC DNA]</scope>
    <source>
        <strain evidence="4">Isolate Vibrio parahaemolyticus/Japan/Matsuzaki /1991</strain>
    </source>
</reference>
<organism evidence="4">
    <name type="scientific">Vibrio phage KVP40 (isolate Vibrio parahaemolyticus/Japan/Matsuzaki/1991)</name>
    <name type="common">KVP40</name>
    <name type="synonym">Bacteriophage KVP40</name>
    <dbReference type="NCBI Taxonomy" id="75320"/>
    <lineage>
        <taxon>Viruses</taxon>
        <taxon>Duplodnaviria</taxon>
        <taxon>Heunggongvirae</taxon>
        <taxon>Uroviricota</taxon>
        <taxon>Caudoviricetes</taxon>
        <taxon>Straboviridae</taxon>
        <taxon>Schizotequatrovirus</taxon>
        <taxon>Schizotequatrovirus KVP40</taxon>
    </lineage>
</organism>
<comment type="function">
    <text evidence="1">Polymerizes as an extended structure around the baseplate-tail tube complex. During ejection, the sheath shifts to a contracted form, thereby making the inner tail tube protrude through the host cell envelope.</text>
</comment>
<comment type="subunit">
    <text evidence="1">Homomultimer.</text>
</comment>
<comment type="subcellular location">
    <subcellularLocation>
        <location evidence="1">Virion</location>
    </subcellularLocation>
    <subcellularLocation>
        <location evidence="1">Host cytoplasm</location>
    </subcellularLocation>
    <text evidence="1">Tail.</text>
</comment>
<comment type="similarity">
    <text evidence="2">Belongs to the myoviridae tail sheath protein family.</text>
</comment>
<keyword id="KW-1035">Host cytoplasm</keyword>
<keyword id="KW-1185">Reference proteome</keyword>
<keyword id="KW-1242">Viral contractile tail ejection system</keyword>
<keyword id="KW-1171">Viral genome ejection through host cell envelope</keyword>
<keyword id="KW-1162">Viral penetration into host cytoplasm</keyword>
<keyword id="KW-1227">Viral tail protein</keyword>
<keyword id="KW-1229">Viral tail sheath protein</keyword>
<keyword id="KW-0946">Virion</keyword>
<keyword id="KW-1160">Virus entry into host cell</keyword>
<protein>
    <recommendedName>
        <fullName>Tail sheath protein</fullName>
        <shortName>TSP</shortName>
    </recommendedName>
</protein>
<evidence type="ECO:0000250" key="1">
    <source>
        <dbReference type="UniProtKB" id="P79678"/>
    </source>
</evidence>
<evidence type="ECO:0000305" key="2"/>
<evidence type="ECO:0000312" key="3">
    <source>
        <dbReference type="EMBL" id="AAQ64425.1"/>
    </source>
</evidence>
<evidence type="ECO:0000312" key="4">
    <source>
        <dbReference type="Proteomes" id="UP000001785"/>
    </source>
</evidence>
<gene>
    <name evidence="3" type="primary">18</name>
    <name evidence="3" type="ORF">KVP40.0356</name>
</gene>
<dbReference type="EMBL" id="AY283928">
    <property type="protein sequence ID" value="AAQ64425.1"/>
    <property type="molecule type" value="Genomic_DNA"/>
</dbReference>
<dbReference type="RefSeq" id="NP_899602.1">
    <property type="nucleotide sequence ID" value="NC_005083.2"/>
</dbReference>
<dbReference type="SMR" id="Q6WHE8"/>
<dbReference type="GeneID" id="2545776"/>
<dbReference type="KEGG" id="vg:2545776"/>
<dbReference type="OrthoDB" id="879at10239"/>
<dbReference type="Proteomes" id="UP000001785">
    <property type="component" value="Genome"/>
</dbReference>
<dbReference type="GO" id="GO:0030430">
    <property type="term" value="C:host cell cytoplasm"/>
    <property type="evidence" value="ECO:0007669"/>
    <property type="project" value="UniProtKB-SubCell"/>
</dbReference>
<dbReference type="GO" id="GO:0098027">
    <property type="term" value="C:virus tail, sheath"/>
    <property type="evidence" value="ECO:0007669"/>
    <property type="project" value="UniProtKB-KW"/>
</dbReference>
<dbReference type="GO" id="GO:0099000">
    <property type="term" value="P:symbiont genome ejection through host cell envelope, contractile tail mechanism"/>
    <property type="evidence" value="ECO:0007669"/>
    <property type="project" value="UniProtKB-KW"/>
</dbReference>
<dbReference type="Gene3D" id="2.40.10.380">
    <property type="match status" value="1"/>
</dbReference>
<dbReference type="Gene3D" id="3.30.1490.450">
    <property type="match status" value="1"/>
</dbReference>
<dbReference type="Gene3D" id="3.40.50.11780">
    <property type="match status" value="1"/>
</dbReference>
<dbReference type="InterPro" id="IPR054565">
    <property type="entry name" value="Gp18-like_dom_I"/>
</dbReference>
<dbReference type="InterPro" id="IPR054564">
    <property type="entry name" value="Gp18_domIII_N"/>
</dbReference>
<dbReference type="InterPro" id="IPR035326">
    <property type="entry name" value="Phage_sheath-like_beta"/>
</dbReference>
<dbReference type="InterPro" id="IPR035089">
    <property type="entry name" value="Phage_sheath_subtilisin"/>
</dbReference>
<dbReference type="InterPro" id="IPR052042">
    <property type="entry name" value="Phage_Tail_Sheath_Structural"/>
</dbReference>
<dbReference type="InterPro" id="IPR020287">
    <property type="entry name" value="Tail_sheath_C"/>
</dbReference>
<dbReference type="PANTHER" id="PTHR35861">
    <property type="match status" value="1"/>
</dbReference>
<dbReference type="PANTHER" id="PTHR35861:SF1">
    <property type="entry name" value="PHAGE TAIL SHEATH PROTEIN"/>
    <property type="match status" value="1"/>
</dbReference>
<dbReference type="Pfam" id="PF22639">
    <property type="entry name" value="Gp18_dom_I"/>
    <property type="match status" value="1"/>
</dbReference>
<dbReference type="Pfam" id="PF22671">
    <property type="entry name" value="Gp18_domIII_N"/>
    <property type="match status" value="1"/>
</dbReference>
<dbReference type="Pfam" id="PF04984">
    <property type="entry name" value="Phage_sheath_1"/>
    <property type="match status" value="1"/>
</dbReference>
<dbReference type="Pfam" id="PF17482">
    <property type="entry name" value="Phage_sheath_1C"/>
    <property type="match status" value="1"/>
</dbReference>
<dbReference type="Pfam" id="PF17481">
    <property type="entry name" value="Phage_sheath_domII"/>
    <property type="match status" value="1"/>
</dbReference>
<accession>Q6WHE8</accession>
<organismHost>
    <name type="scientific">Vibrio parahaemolyticus</name>
    <dbReference type="NCBI Taxonomy" id="670"/>
</organismHost>
<sequence length="671" mass="72166">MTLLSPGIENKEINLASAIGRAATGRAAMVGKFEWGPAYSITQVTSESDLVTIFGRPNDYTAASFMTANNFLKYGNDLRLVRICDATTAQNATPLYNAVEYTIGASNGCVVGDDITITYSGVGALTAKGKVLEVDAGNNNAASKIFLPSAEIVAAAKSDGNYPSVGTITLQPTQGDIALTNIEIIDTGSVYFPNIELAFDALTAIETEGGALKYADLIEKQGFPRLSARYVGDFGDAISVEIINYADYQTAFAFAAGHTLGDIELPIYPDGGTRSINLSSYFTFGPSNSNQYAVIVRVSGEVEEAFIVSTNPGDKDVNGQSIFIDEYFENSGSAYITAIAEGWKTESGAYNFGGGSDANAGADDWMFGLDMLSDPEVLYTNLVIAGNAAAEEVSIASTVQKYAIDSVGNVRQDCVVFVSPPQSLIVNKQAGTAVANIQGWRTGIDPTNGQAVVDNLNVSTTYAVIDGNYKYQYDKYNDRNRWVPLAGDIAGLCAYTDQVSQPWMSPAGFNRGQIKGVNRLAVDLRRAHRDALYQIGINPVVGFAGQGFVLYGDKTATQQASAFDRINVRRLFNLLKKAISDAAKYRLFELNDEFTRSSFKSEIDAYLTNIQDLGGVYDFRVVCDETNNPGSVIDRNEFVASIYVKPAKSINFITLNFVATSTDADFAEIIG</sequence>
<name>TSP_BPKVM</name>
<proteinExistence type="inferred from homology"/>
<feature type="chain" id="PRO_0000432776" description="Tail sheath protein">
    <location>
        <begin position="1"/>
        <end position="671"/>
    </location>
</feature>